<keyword id="KW-0285">Flavoprotein</keyword>
<keyword id="KW-0288">FMN</keyword>
<keyword id="KW-0520">NAD</keyword>
<keyword id="KW-0521">NADP</keyword>
<keyword id="KW-0547">Nucleotide-binding</keyword>
<keyword id="KW-0560">Oxidoreductase</keyword>
<comment type="catalytic activity">
    <reaction evidence="1">
        <text>a quinone + NADH + H(+) = a quinol + NAD(+)</text>
        <dbReference type="Rhea" id="RHEA:46160"/>
        <dbReference type="ChEBI" id="CHEBI:15378"/>
        <dbReference type="ChEBI" id="CHEBI:24646"/>
        <dbReference type="ChEBI" id="CHEBI:57540"/>
        <dbReference type="ChEBI" id="CHEBI:57945"/>
        <dbReference type="ChEBI" id="CHEBI:132124"/>
        <dbReference type="EC" id="1.6.5.2"/>
    </reaction>
</comment>
<comment type="catalytic activity">
    <reaction evidence="1">
        <text>a quinone + NADPH + H(+) = a quinol + NADP(+)</text>
        <dbReference type="Rhea" id="RHEA:46164"/>
        <dbReference type="ChEBI" id="CHEBI:15378"/>
        <dbReference type="ChEBI" id="CHEBI:24646"/>
        <dbReference type="ChEBI" id="CHEBI:57783"/>
        <dbReference type="ChEBI" id="CHEBI:58349"/>
        <dbReference type="ChEBI" id="CHEBI:132124"/>
        <dbReference type="EC" id="1.6.5.2"/>
    </reaction>
</comment>
<comment type="cofactor">
    <cofactor evidence="1">
        <name>FMN</name>
        <dbReference type="ChEBI" id="CHEBI:58210"/>
    </cofactor>
    <text evidence="1">Binds 1 FMN per monomer.</text>
</comment>
<comment type="similarity">
    <text evidence="1">Belongs to the WrbA family.</text>
</comment>
<sequence length="200" mass="21779">MSRILVLYHSLWGHVEQMAEAEAEGARSVSGIQVDVRRVPETMPAETLAAVHAKTHQAAPEAHPDDLANYDGIIFGTPTRFGNMTGQMRNFLDRTGNLWQEGRLVGKVGSVFVSTATQHGGQETTLTSFHTFLFHQGMLVVGVPYSCTELMNMDEISGGTPYGASTMSKGDGSRQPSANELTIARFQGRHVAEITRKLFG</sequence>
<accession>B5EMU4</accession>
<protein>
    <recommendedName>
        <fullName evidence="1">NAD(P)H dehydrogenase (quinone)</fullName>
        <ecNumber evidence="1">1.6.5.2</ecNumber>
    </recommendedName>
    <alternativeName>
        <fullName>Flavoprotein WrbA</fullName>
    </alternativeName>
    <alternativeName>
        <fullName evidence="1">NAD(P)H:quinone oxidoreductase</fullName>
        <shortName evidence="1">NQO</shortName>
    </alternativeName>
</protein>
<proteinExistence type="inferred from homology"/>
<name>NQOR_ACIF5</name>
<evidence type="ECO:0000255" key="1">
    <source>
        <dbReference type="HAMAP-Rule" id="MF_01017"/>
    </source>
</evidence>
<feature type="chain" id="PRO_1000200613" description="NAD(P)H dehydrogenase (quinone)">
    <location>
        <begin position="1"/>
        <end position="200"/>
    </location>
</feature>
<feature type="domain" description="Flavodoxin-like" evidence="1">
    <location>
        <begin position="4"/>
        <end position="191"/>
    </location>
</feature>
<feature type="binding site" evidence="1">
    <location>
        <begin position="10"/>
        <end position="15"/>
    </location>
    <ligand>
        <name>FMN</name>
        <dbReference type="ChEBI" id="CHEBI:58210"/>
    </ligand>
</feature>
<feature type="binding site" evidence="1">
    <location>
        <position position="12"/>
    </location>
    <ligand>
        <name>NAD(+)</name>
        <dbReference type="ChEBI" id="CHEBI:57540"/>
    </ligand>
</feature>
<feature type="binding site" evidence="1">
    <location>
        <begin position="79"/>
        <end position="81"/>
    </location>
    <ligand>
        <name>FMN</name>
        <dbReference type="ChEBI" id="CHEBI:58210"/>
    </ligand>
</feature>
<feature type="binding site" evidence="1">
    <location>
        <position position="99"/>
    </location>
    <ligand>
        <name>substrate</name>
    </ligand>
</feature>
<feature type="binding site" evidence="1">
    <location>
        <begin position="114"/>
        <end position="120"/>
    </location>
    <ligand>
        <name>FMN</name>
        <dbReference type="ChEBI" id="CHEBI:58210"/>
    </ligand>
</feature>
<feature type="binding site" evidence="1">
    <location>
        <position position="135"/>
    </location>
    <ligand>
        <name>FMN</name>
        <dbReference type="ChEBI" id="CHEBI:58210"/>
    </ligand>
</feature>
<gene>
    <name type="ordered locus">Lferr_0620</name>
</gene>
<reference key="1">
    <citation type="submission" date="2008-08" db="EMBL/GenBank/DDBJ databases">
        <title>Complete sequence of Acidithiobacillus ferrooxidans ATCC 53993.</title>
        <authorList>
            <person name="Lucas S."/>
            <person name="Copeland A."/>
            <person name="Lapidus A."/>
            <person name="Glavina del Rio T."/>
            <person name="Dalin E."/>
            <person name="Tice H."/>
            <person name="Bruce D."/>
            <person name="Goodwin L."/>
            <person name="Pitluck S."/>
            <person name="Sims D."/>
            <person name="Brettin T."/>
            <person name="Detter J.C."/>
            <person name="Han C."/>
            <person name="Kuske C.R."/>
            <person name="Larimer F."/>
            <person name="Land M."/>
            <person name="Hauser L."/>
            <person name="Kyrpides N."/>
            <person name="Lykidis A."/>
            <person name="Borole A.P."/>
        </authorList>
    </citation>
    <scope>NUCLEOTIDE SEQUENCE [LARGE SCALE GENOMIC DNA]</scope>
    <source>
        <strain>ATCC 53993 / BNL-5-31</strain>
    </source>
</reference>
<organism>
    <name type="scientific">Acidithiobacillus ferrooxidans (strain ATCC 53993 / BNL-5-31)</name>
    <name type="common">Leptospirillum ferrooxidans (ATCC 53993)</name>
    <dbReference type="NCBI Taxonomy" id="380394"/>
    <lineage>
        <taxon>Bacteria</taxon>
        <taxon>Pseudomonadati</taxon>
        <taxon>Pseudomonadota</taxon>
        <taxon>Acidithiobacillia</taxon>
        <taxon>Acidithiobacillales</taxon>
        <taxon>Acidithiobacillaceae</taxon>
        <taxon>Acidithiobacillus</taxon>
    </lineage>
</organism>
<dbReference type="EC" id="1.6.5.2" evidence="1"/>
<dbReference type="EMBL" id="CP001132">
    <property type="protein sequence ID" value="ACH82874.1"/>
    <property type="molecule type" value="Genomic_DNA"/>
</dbReference>
<dbReference type="SMR" id="B5EMU4"/>
<dbReference type="KEGG" id="afe:Lferr_0620"/>
<dbReference type="eggNOG" id="COG0655">
    <property type="taxonomic scope" value="Bacteria"/>
</dbReference>
<dbReference type="HOGENOM" id="CLU_051402_0_2_6"/>
<dbReference type="GO" id="GO:0016020">
    <property type="term" value="C:membrane"/>
    <property type="evidence" value="ECO:0007669"/>
    <property type="project" value="TreeGrafter"/>
</dbReference>
<dbReference type="GO" id="GO:0050660">
    <property type="term" value="F:flavin adenine dinucleotide binding"/>
    <property type="evidence" value="ECO:0007669"/>
    <property type="project" value="UniProtKB-UniRule"/>
</dbReference>
<dbReference type="GO" id="GO:0010181">
    <property type="term" value="F:FMN binding"/>
    <property type="evidence" value="ECO:0007669"/>
    <property type="project" value="InterPro"/>
</dbReference>
<dbReference type="GO" id="GO:0051287">
    <property type="term" value="F:NAD binding"/>
    <property type="evidence" value="ECO:0007669"/>
    <property type="project" value="UniProtKB-UniRule"/>
</dbReference>
<dbReference type="GO" id="GO:0050136">
    <property type="term" value="F:NADH:ubiquinone reductase (non-electrogenic) activity"/>
    <property type="evidence" value="ECO:0007669"/>
    <property type="project" value="RHEA"/>
</dbReference>
<dbReference type="GO" id="GO:0050661">
    <property type="term" value="F:NADP binding"/>
    <property type="evidence" value="ECO:0007669"/>
    <property type="project" value="UniProtKB-UniRule"/>
</dbReference>
<dbReference type="GO" id="GO:0008753">
    <property type="term" value="F:NADPH dehydrogenase (quinone) activity"/>
    <property type="evidence" value="ECO:0007669"/>
    <property type="project" value="RHEA"/>
</dbReference>
<dbReference type="FunFam" id="3.40.50.360:FF:000001">
    <property type="entry name" value="NAD(P)H dehydrogenase (Quinone) FQR1-like"/>
    <property type="match status" value="1"/>
</dbReference>
<dbReference type="Gene3D" id="3.40.50.360">
    <property type="match status" value="1"/>
</dbReference>
<dbReference type="HAMAP" id="MF_01017">
    <property type="entry name" value="NQOR"/>
    <property type="match status" value="1"/>
</dbReference>
<dbReference type="InterPro" id="IPR008254">
    <property type="entry name" value="Flavodoxin/NO_synth"/>
</dbReference>
<dbReference type="InterPro" id="IPR029039">
    <property type="entry name" value="Flavoprotein-like_sf"/>
</dbReference>
<dbReference type="InterPro" id="IPR010089">
    <property type="entry name" value="Flavoprotein_WrbA-like"/>
</dbReference>
<dbReference type="InterPro" id="IPR005025">
    <property type="entry name" value="FMN_Rdtase-like_dom"/>
</dbReference>
<dbReference type="InterPro" id="IPR037513">
    <property type="entry name" value="NQO"/>
</dbReference>
<dbReference type="NCBIfam" id="TIGR01755">
    <property type="entry name" value="flav_wrbA"/>
    <property type="match status" value="1"/>
</dbReference>
<dbReference type="NCBIfam" id="NF002999">
    <property type="entry name" value="PRK03767.1"/>
    <property type="match status" value="1"/>
</dbReference>
<dbReference type="PANTHER" id="PTHR30546">
    <property type="entry name" value="FLAVODOXIN-RELATED PROTEIN WRBA-RELATED"/>
    <property type="match status" value="1"/>
</dbReference>
<dbReference type="PANTHER" id="PTHR30546:SF23">
    <property type="entry name" value="FLAVOPROTEIN-LIKE PROTEIN YCP4-RELATED"/>
    <property type="match status" value="1"/>
</dbReference>
<dbReference type="Pfam" id="PF03358">
    <property type="entry name" value="FMN_red"/>
    <property type="match status" value="1"/>
</dbReference>
<dbReference type="SUPFAM" id="SSF52218">
    <property type="entry name" value="Flavoproteins"/>
    <property type="match status" value="1"/>
</dbReference>
<dbReference type="PROSITE" id="PS50902">
    <property type="entry name" value="FLAVODOXIN_LIKE"/>
    <property type="match status" value="1"/>
</dbReference>